<organism>
    <name type="scientific">Burkholderia mallei (strain NCTC 10247)</name>
    <dbReference type="NCBI Taxonomy" id="320389"/>
    <lineage>
        <taxon>Bacteria</taxon>
        <taxon>Pseudomonadati</taxon>
        <taxon>Pseudomonadota</taxon>
        <taxon>Betaproteobacteria</taxon>
        <taxon>Burkholderiales</taxon>
        <taxon>Burkholderiaceae</taxon>
        <taxon>Burkholderia</taxon>
        <taxon>pseudomallei group</taxon>
    </lineage>
</organism>
<reference key="1">
    <citation type="journal article" date="2010" name="Genome Biol. Evol.">
        <title>Continuing evolution of Burkholderia mallei through genome reduction and large-scale rearrangements.</title>
        <authorList>
            <person name="Losada L."/>
            <person name="Ronning C.M."/>
            <person name="DeShazer D."/>
            <person name="Woods D."/>
            <person name="Fedorova N."/>
            <person name="Kim H.S."/>
            <person name="Shabalina S.A."/>
            <person name="Pearson T.R."/>
            <person name="Brinkac L."/>
            <person name="Tan P."/>
            <person name="Nandi T."/>
            <person name="Crabtree J."/>
            <person name="Badger J."/>
            <person name="Beckstrom-Sternberg S."/>
            <person name="Saqib M."/>
            <person name="Schutzer S.E."/>
            <person name="Keim P."/>
            <person name="Nierman W.C."/>
        </authorList>
    </citation>
    <scope>NUCLEOTIDE SEQUENCE [LARGE SCALE GENOMIC DNA]</scope>
    <source>
        <strain>NCTC 10247</strain>
    </source>
</reference>
<accession>A3MD35</accession>
<name>ASPD_BURM7</name>
<protein>
    <recommendedName>
        <fullName evidence="1">L-aspartate dehydrogenase</fullName>
        <ecNumber evidence="1">1.4.1.21</ecNumber>
    </recommendedName>
</protein>
<sequence length="271" mass="27747">MRNAHAPVDVAMIGFGAIGAAVYRAVEHDAALRVAHVIVPEHQCDAVRGALGERVDVVSSVDALACRPQFALECAGHGALVDHVVPLLKAGTDCAVASIGALSDLALLDALSNAADAGGATLTLLSGAIGGIDALAAARQGGLDEVRYIGRKPPLGWLGTPAEAICDLRAMAAEQTIFEGSARDAAQLYPRNANVAATVALAGVGLDATRVCLIADPAVTRNVHRIVARGAFGEMSIEMSGKPLPDNPKTSALTAFSAIRALRNRASHCVI</sequence>
<comment type="function">
    <text evidence="1">Specifically catalyzes the NAD or NADP-dependent dehydrogenation of L-aspartate to iminoaspartate.</text>
</comment>
<comment type="catalytic activity">
    <reaction evidence="1">
        <text>L-aspartate + NADP(+) + H2O = oxaloacetate + NH4(+) + NADPH + H(+)</text>
        <dbReference type="Rhea" id="RHEA:11784"/>
        <dbReference type="ChEBI" id="CHEBI:15377"/>
        <dbReference type="ChEBI" id="CHEBI:15378"/>
        <dbReference type="ChEBI" id="CHEBI:16452"/>
        <dbReference type="ChEBI" id="CHEBI:28938"/>
        <dbReference type="ChEBI" id="CHEBI:29991"/>
        <dbReference type="ChEBI" id="CHEBI:57783"/>
        <dbReference type="ChEBI" id="CHEBI:58349"/>
        <dbReference type="EC" id="1.4.1.21"/>
    </reaction>
</comment>
<comment type="catalytic activity">
    <reaction evidence="1">
        <text>L-aspartate + NAD(+) + H2O = oxaloacetate + NH4(+) + NADH + H(+)</text>
        <dbReference type="Rhea" id="RHEA:11788"/>
        <dbReference type="ChEBI" id="CHEBI:15377"/>
        <dbReference type="ChEBI" id="CHEBI:15378"/>
        <dbReference type="ChEBI" id="CHEBI:16452"/>
        <dbReference type="ChEBI" id="CHEBI:28938"/>
        <dbReference type="ChEBI" id="CHEBI:29991"/>
        <dbReference type="ChEBI" id="CHEBI:57540"/>
        <dbReference type="ChEBI" id="CHEBI:57945"/>
        <dbReference type="EC" id="1.4.1.21"/>
    </reaction>
</comment>
<comment type="pathway">
    <text evidence="1">Cofactor biosynthesis; NAD(+) biosynthesis; iminoaspartate from L-aspartate (dehydrogenase route): step 1/1.</text>
</comment>
<comment type="miscellaneous">
    <text evidence="1">The iminoaspartate product is unstable in aqueous solution and can decompose to oxaloacetate and ammonia.</text>
</comment>
<comment type="similarity">
    <text evidence="1">Belongs to the L-aspartate dehydrogenase family.</text>
</comment>
<feature type="chain" id="PRO_1000067294" description="L-aspartate dehydrogenase">
    <location>
        <begin position="1"/>
        <end position="271"/>
    </location>
</feature>
<feature type="active site" evidence="1">
    <location>
        <position position="224"/>
    </location>
</feature>
<feature type="binding site" evidence="1">
    <location>
        <position position="128"/>
    </location>
    <ligand>
        <name>NAD(+)</name>
        <dbReference type="ChEBI" id="CHEBI:57540"/>
    </ligand>
</feature>
<feature type="binding site" evidence="1">
    <location>
        <position position="194"/>
    </location>
    <ligand>
        <name>NAD(+)</name>
        <dbReference type="ChEBI" id="CHEBI:57540"/>
    </ligand>
</feature>
<evidence type="ECO:0000255" key="1">
    <source>
        <dbReference type="HAMAP-Rule" id="MF_01265"/>
    </source>
</evidence>
<proteinExistence type="inferred from homology"/>
<keyword id="KW-0520">NAD</keyword>
<keyword id="KW-0521">NADP</keyword>
<keyword id="KW-0560">Oxidoreductase</keyword>
<keyword id="KW-0662">Pyridine nucleotide biosynthesis</keyword>
<gene>
    <name evidence="1" type="primary">nadX</name>
    <name type="ordered locus">BMA10247_A0979</name>
</gene>
<dbReference type="EC" id="1.4.1.21" evidence="1"/>
<dbReference type="EMBL" id="CP000547">
    <property type="protein sequence ID" value="ABO03049.1"/>
    <property type="molecule type" value="Genomic_DNA"/>
</dbReference>
<dbReference type="RefSeq" id="WP_004195445.1">
    <property type="nucleotide sequence ID" value="NZ_CP007801.1"/>
</dbReference>
<dbReference type="SMR" id="A3MD35"/>
<dbReference type="KEGG" id="bmaz:BM44_4157"/>
<dbReference type="KEGG" id="bmn:BMA10247_A0979"/>
<dbReference type="PATRIC" id="fig|320389.8.peg.4717"/>
<dbReference type="UniPathway" id="UPA00253">
    <property type="reaction ID" value="UER00456"/>
</dbReference>
<dbReference type="GO" id="GO:0033735">
    <property type="term" value="F:aspartate dehydrogenase activity"/>
    <property type="evidence" value="ECO:0007669"/>
    <property type="project" value="UniProtKB-EC"/>
</dbReference>
<dbReference type="GO" id="GO:0051287">
    <property type="term" value="F:NAD binding"/>
    <property type="evidence" value="ECO:0007669"/>
    <property type="project" value="UniProtKB-UniRule"/>
</dbReference>
<dbReference type="GO" id="GO:0050661">
    <property type="term" value="F:NADP binding"/>
    <property type="evidence" value="ECO:0007669"/>
    <property type="project" value="UniProtKB-UniRule"/>
</dbReference>
<dbReference type="GO" id="GO:0016639">
    <property type="term" value="F:oxidoreductase activity, acting on the CH-NH2 group of donors, NAD or NADP as acceptor"/>
    <property type="evidence" value="ECO:0007669"/>
    <property type="project" value="UniProtKB-UniRule"/>
</dbReference>
<dbReference type="GO" id="GO:0009435">
    <property type="term" value="P:NAD biosynthetic process"/>
    <property type="evidence" value="ECO:0007669"/>
    <property type="project" value="UniProtKB-UniRule"/>
</dbReference>
<dbReference type="Gene3D" id="3.30.360.10">
    <property type="entry name" value="Dihydrodipicolinate Reductase, domain 2"/>
    <property type="match status" value="1"/>
</dbReference>
<dbReference type="Gene3D" id="3.40.50.720">
    <property type="entry name" value="NAD(P)-binding Rossmann-like Domain"/>
    <property type="match status" value="1"/>
</dbReference>
<dbReference type="HAMAP" id="MF_01265">
    <property type="entry name" value="NadX"/>
    <property type="match status" value="1"/>
</dbReference>
<dbReference type="InterPro" id="IPR005106">
    <property type="entry name" value="Asp/hSer_DH_NAD-bd"/>
</dbReference>
<dbReference type="InterPro" id="IPR002811">
    <property type="entry name" value="Asp_DH"/>
</dbReference>
<dbReference type="InterPro" id="IPR020626">
    <property type="entry name" value="Asp_DH_prok"/>
</dbReference>
<dbReference type="InterPro" id="IPR011182">
    <property type="entry name" value="L-Asp_DH"/>
</dbReference>
<dbReference type="InterPro" id="IPR036291">
    <property type="entry name" value="NAD(P)-bd_dom_sf"/>
</dbReference>
<dbReference type="NCBIfam" id="NF009826">
    <property type="entry name" value="PRK13303.1-1"/>
    <property type="match status" value="1"/>
</dbReference>
<dbReference type="NCBIfam" id="NF009827">
    <property type="entry name" value="PRK13303.1-2"/>
    <property type="match status" value="1"/>
</dbReference>
<dbReference type="NCBIfam" id="NF009828">
    <property type="entry name" value="PRK13303.1-3"/>
    <property type="match status" value="1"/>
</dbReference>
<dbReference type="PANTHER" id="PTHR31873:SF6">
    <property type="entry name" value="ASPARTATE DEHYDROGENASE DOMAIN-CONTAINING PROTEIN"/>
    <property type="match status" value="1"/>
</dbReference>
<dbReference type="PANTHER" id="PTHR31873">
    <property type="entry name" value="L-ASPARTATE DEHYDROGENASE-RELATED"/>
    <property type="match status" value="1"/>
</dbReference>
<dbReference type="Pfam" id="PF01958">
    <property type="entry name" value="Asp_DH_C"/>
    <property type="match status" value="1"/>
</dbReference>
<dbReference type="Pfam" id="PF03447">
    <property type="entry name" value="NAD_binding_3"/>
    <property type="match status" value="1"/>
</dbReference>
<dbReference type="PIRSF" id="PIRSF005227">
    <property type="entry name" value="Asp_dh_NAD_syn"/>
    <property type="match status" value="1"/>
</dbReference>
<dbReference type="SUPFAM" id="SSF55347">
    <property type="entry name" value="Glyceraldehyde-3-phosphate dehydrogenase-like, C-terminal domain"/>
    <property type="match status" value="1"/>
</dbReference>
<dbReference type="SUPFAM" id="SSF51735">
    <property type="entry name" value="NAD(P)-binding Rossmann-fold domains"/>
    <property type="match status" value="1"/>
</dbReference>